<organism>
    <name type="scientific">Salmonella enteritidis PT4 (strain P125109)</name>
    <dbReference type="NCBI Taxonomy" id="550537"/>
    <lineage>
        <taxon>Bacteria</taxon>
        <taxon>Pseudomonadati</taxon>
        <taxon>Pseudomonadota</taxon>
        <taxon>Gammaproteobacteria</taxon>
        <taxon>Enterobacterales</taxon>
        <taxon>Enterobacteriaceae</taxon>
        <taxon>Salmonella</taxon>
    </lineage>
</organism>
<dbReference type="EC" id="3.2.2.-" evidence="1"/>
<dbReference type="EC" id="4.2.99.18" evidence="1"/>
<dbReference type="EMBL" id="AM933172">
    <property type="protein sequence ID" value="CAR32264.1"/>
    <property type="molecule type" value="Genomic_DNA"/>
</dbReference>
<dbReference type="RefSeq" id="WP_001113969.1">
    <property type="nucleotide sequence ID" value="NC_011294.1"/>
</dbReference>
<dbReference type="SMR" id="B5QWF8"/>
<dbReference type="KEGG" id="set:SEN0678"/>
<dbReference type="HOGENOM" id="CLU_038423_2_2_6"/>
<dbReference type="Proteomes" id="UP000000613">
    <property type="component" value="Chromosome"/>
</dbReference>
<dbReference type="GO" id="GO:0140078">
    <property type="term" value="F:class I DNA-(apurinic or apyrimidinic site) endonuclease activity"/>
    <property type="evidence" value="ECO:0007669"/>
    <property type="project" value="UniProtKB-EC"/>
</dbReference>
<dbReference type="GO" id="GO:0003684">
    <property type="term" value="F:damaged DNA binding"/>
    <property type="evidence" value="ECO:0007669"/>
    <property type="project" value="InterPro"/>
</dbReference>
<dbReference type="GO" id="GO:0000703">
    <property type="term" value="F:oxidized pyrimidine nucleobase lesion DNA N-glycosylase activity"/>
    <property type="evidence" value="ECO:0007669"/>
    <property type="project" value="UniProtKB-UniRule"/>
</dbReference>
<dbReference type="GO" id="GO:0008270">
    <property type="term" value="F:zinc ion binding"/>
    <property type="evidence" value="ECO:0007669"/>
    <property type="project" value="UniProtKB-UniRule"/>
</dbReference>
<dbReference type="GO" id="GO:0006284">
    <property type="term" value="P:base-excision repair"/>
    <property type="evidence" value="ECO:0007669"/>
    <property type="project" value="InterPro"/>
</dbReference>
<dbReference type="CDD" id="cd08965">
    <property type="entry name" value="EcNei-like_N"/>
    <property type="match status" value="1"/>
</dbReference>
<dbReference type="FunFam" id="1.10.8.50:FF:000005">
    <property type="entry name" value="Endonuclease 8"/>
    <property type="match status" value="1"/>
</dbReference>
<dbReference type="FunFam" id="3.20.190.10:FF:000002">
    <property type="entry name" value="Endonuclease 8"/>
    <property type="match status" value="1"/>
</dbReference>
<dbReference type="Gene3D" id="1.10.8.50">
    <property type="match status" value="1"/>
</dbReference>
<dbReference type="Gene3D" id="3.20.190.10">
    <property type="entry name" value="MutM-like, N-terminal"/>
    <property type="match status" value="1"/>
</dbReference>
<dbReference type="HAMAP" id="MF_01253">
    <property type="entry name" value="Endonuclease_8"/>
    <property type="match status" value="1"/>
</dbReference>
<dbReference type="InterPro" id="IPR015886">
    <property type="entry name" value="DNA_glyclase/AP_lyase_DNA-bd"/>
</dbReference>
<dbReference type="InterPro" id="IPR015887">
    <property type="entry name" value="DNA_glyclase_Znf_dom_DNA_BS"/>
</dbReference>
<dbReference type="InterPro" id="IPR044091">
    <property type="entry name" value="EcNei-like_N"/>
</dbReference>
<dbReference type="InterPro" id="IPR023713">
    <property type="entry name" value="Endonuclease-VIII"/>
</dbReference>
<dbReference type="InterPro" id="IPR012319">
    <property type="entry name" value="FPG_cat"/>
</dbReference>
<dbReference type="InterPro" id="IPR035937">
    <property type="entry name" value="MutM-like_N-ter"/>
</dbReference>
<dbReference type="InterPro" id="IPR010979">
    <property type="entry name" value="Ribosomal_uS13-like_H2TH"/>
</dbReference>
<dbReference type="InterPro" id="IPR000214">
    <property type="entry name" value="Znf_DNA_glyclase/AP_lyase"/>
</dbReference>
<dbReference type="InterPro" id="IPR010663">
    <property type="entry name" value="Znf_FPG/IleRS"/>
</dbReference>
<dbReference type="NCBIfam" id="NF007763">
    <property type="entry name" value="PRK10445.1"/>
    <property type="match status" value="1"/>
</dbReference>
<dbReference type="PANTHER" id="PTHR42697">
    <property type="entry name" value="ENDONUCLEASE 8"/>
    <property type="match status" value="1"/>
</dbReference>
<dbReference type="PANTHER" id="PTHR42697:SF1">
    <property type="entry name" value="ENDONUCLEASE 8"/>
    <property type="match status" value="1"/>
</dbReference>
<dbReference type="Pfam" id="PF01149">
    <property type="entry name" value="Fapy_DNA_glyco"/>
    <property type="match status" value="1"/>
</dbReference>
<dbReference type="Pfam" id="PF06831">
    <property type="entry name" value="H2TH"/>
    <property type="match status" value="1"/>
</dbReference>
<dbReference type="Pfam" id="PF06827">
    <property type="entry name" value="zf-FPG_IleRS"/>
    <property type="match status" value="1"/>
</dbReference>
<dbReference type="SMART" id="SM00898">
    <property type="entry name" value="Fapy_DNA_glyco"/>
    <property type="match status" value="1"/>
</dbReference>
<dbReference type="SMART" id="SM01232">
    <property type="entry name" value="H2TH"/>
    <property type="match status" value="1"/>
</dbReference>
<dbReference type="SUPFAM" id="SSF57716">
    <property type="entry name" value="Glucocorticoid receptor-like (DNA-binding domain)"/>
    <property type="match status" value="1"/>
</dbReference>
<dbReference type="SUPFAM" id="SSF81624">
    <property type="entry name" value="N-terminal domain of MutM-like DNA repair proteins"/>
    <property type="match status" value="1"/>
</dbReference>
<dbReference type="SUPFAM" id="SSF46946">
    <property type="entry name" value="S13-like H2TH domain"/>
    <property type="match status" value="1"/>
</dbReference>
<dbReference type="PROSITE" id="PS51068">
    <property type="entry name" value="FPG_CAT"/>
    <property type="match status" value="1"/>
</dbReference>
<dbReference type="PROSITE" id="PS01242">
    <property type="entry name" value="ZF_FPG_1"/>
    <property type="match status" value="1"/>
</dbReference>
<dbReference type="PROSITE" id="PS51066">
    <property type="entry name" value="ZF_FPG_2"/>
    <property type="match status" value="1"/>
</dbReference>
<proteinExistence type="inferred from homology"/>
<accession>B5QWF8</accession>
<sequence>MPEGPEIRRAADNLEAAIKGKPLTDVWFAFAQLKPYESQLTGQLVTRIETRGKALLTHFSNGLTLYSHNQLYGVWRVIDTGEIPQTTRILRVRLQTADKTILLYSASDIEMLTAEQLTTHPFLQRVGPDVLDARLTPEEVKARLLSPRFRNRQFSGLLLDQAFLAGLGNYLRVEILWQVGLTGQHKAKDLNEAQLNALSHALLDIPRLSYTTRGQSDENKHHGALFRFKVFHRDGEACERCGGIIEKTTLSSRPFYWCPHCQK</sequence>
<name>END8_SALEP</name>
<gene>
    <name evidence="1" type="primary">nei</name>
    <name type="ordered locus">SEN0678</name>
</gene>
<reference key="1">
    <citation type="journal article" date="2008" name="Genome Res.">
        <title>Comparative genome analysis of Salmonella enteritidis PT4 and Salmonella gallinarum 287/91 provides insights into evolutionary and host adaptation pathways.</title>
        <authorList>
            <person name="Thomson N.R."/>
            <person name="Clayton D.J."/>
            <person name="Windhorst D."/>
            <person name="Vernikos G."/>
            <person name="Davidson S."/>
            <person name="Churcher C."/>
            <person name="Quail M.A."/>
            <person name="Stevens M."/>
            <person name="Jones M.A."/>
            <person name="Watson M."/>
            <person name="Barron A."/>
            <person name="Layton A."/>
            <person name="Pickard D."/>
            <person name="Kingsley R.A."/>
            <person name="Bignell A."/>
            <person name="Clark L."/>
            <person name="Harris B."/>
            <person name="Ormond D."/>
            <person name="Abdellah Z."/>
            <person name="Brooks K."/>
            <person name="Cherevach I."/>
            <person name="Chillingworth T."/>
            <person name="Woodward J."/>
            <person name="Norberczak H."/>
            <person name="Lord A."/>
            <person name="Arrowsmith C."/>
            <person name="Jagels K."/>
            <person name="Moule S."/>
            <person name="Mungall K."/>
            <person name="Saunders M."/>
            <person name="Whitehead S."/>
            <person name="Chabalgoity J.A."/>
            <person name="Maskell D."/>
            <person name="Humphreys T."/>
            <person name="Roberts M."/>
            <person name="Barrow P.A."/>
            <person name="Dougan G."/>
            <person name="Parkhill J."/>
        </authorList>
    </citation>
    <scope>NUCLEOTIDE SEQUENCE [LARGE SCALE GENOMIC DNA]</scope>
    <source>
        <strain>P125109</strain>
    </source>
</reference>
<evidence type="ECO:0000255" key="1">
    <source>
        <dbReference type="HAMAP-Rule" id="MF_01253"/>
    </source>
</evidence>
<protein>
    <recommendedName>
        <fullName evidence="1">Endonuclease 8</fullName>
    </recommendedName>
    <alternativeName>
        <fullName evidence="1">DNA glycosylase/AP lyase Nei</fullName>
        <ecNumber evidence="1">3.2.2.-</ecNumber>
        <ecNumber evidence="1">4.2.99.18</ecNumber>
    </alternativeName>
    <alternativeName>
        <fullName evidence="1">DNA-(apurinic or apyrimidinic site) lyase Nei</fullName>
    </alternativeName>
    <alternativeName>
        <fullName evidence="1">Endonuclease VIII</fullName>
    </alternativeName>
</protein>
<feature type="initiator methionine" description="Removed" evidence="1">
    <location>
        <position position="1"/>
    </location>
</feature>
<feature type="chain" id="PRO_1000139941" description="Endonuclease 8">
    <location>
        <begin position="2"/>
        <end position="263"/>
    </location>
</feature>
<feature type="zinc finger region" description="FPG-type" evidence="1">
    <location>
        <begin position="229"/>
        <end position="263"/>
    </location>
</feature>
<feature type="active site" description="Schiff-base intermediate with DNA" evidence="1">
    <location>
        <position position="2"/>
    </location>
</feature>
<feature type="active site" description="Proton donor" evidence="1">
    <location>
        <position position="3"/>
    </location>
</feature>
<feature type="active site" description="Proton donor; for beta-elimination activity" evidence="1">
    <location>
        <position position="53"/>
    </location>
</feature>
<feature type="active site" description="Proton donor; for delta-elimination activity" evidence="1">
    <location>
        <position position="253"/>
    </location>
</feature>
<feature type="binding site" evidence="1">
    <location>
        <position position="70"/>
    </location>
    <ligand>
        <name>DNA</name>
        <dbReference type="ChEBI" id="CHEBI:16991"/>
    </ligand>
</feature>
<feature type="binding site" evidence="1">
    <location>
        <position position="125"/>
    </location>
    <ligand>
        <name>DNA</name>
        <dbReference type="ChEBI" id="CHEBI:16991"/>
    </ligand>
</feature>
<feature type="binding site" evidence="1">
    <location>
        <position position="169"/>
    </location>
    <ligand>
        <name>DNA</name>
        <dbReference type="ChEBI" id="CHEBI:16991"/>
    </ligand>
</feature>
<comment type="function">
    <text evidence="1">Involved in base excision repair of DNA damaged by oxidation or by mutagenic agents. Acts as a DNA glycosylase that recognizes and removes damaged bases. Has a preference for oxidized pyrimidines, such as thymine glycol, 5,6-dihydrouracil and 5,6-dihydrothymine. Has AP (apurinic/apyrimidinic) lyase activity and introduces nicks in the DNA strand. Cleaves the DNA backbone by beta-delta elimination to generate a single-strand break at the site of the removed base with both 3'- and 5'-phosphates.</text>
</comment>
<comment type="catalytic activity">
    <reaction evidence="1">
        <text>2'-deoxyribonucleotide-(2'-deoxyribose 5'-phosphate)-2'-deoxyribonucleotide-DNA = a 3'-end 2'-deoxyribonucleotide-(2,3-dehydro-2,3-deoxyribose 5'-phosphate)-DNA + a 5'-end 5'-phospho-2'-deoxyribonucleoside-DNA + H(+)</text>
        <dbReference type="Rhea" id="RHEA:66592"/>
        <dbReference type="Rhea" id="RHEA-COMP:13180"/>
        <dbReference type="Rhea" id="RHEA-COMP:16897"/>
        <dbReference type="Rhea" id="RHEA-COMP:17067"/>
        <dbReference type="ChEBI" id="CHEBI:15378"/>
        <dbReference type="ChEBI" id="CHEBI:136412"/>
        <dbReference type="ChEBI" id="CHEBI:157695"/>
        <dbReference type="ChEBI" id="CHEBI:167181"/>
        <dbReference type="EC" id="4.2.99.18"/>
    </reaction>
</comment>
<comment type="cofactor">
    <cofactor evidence="1">
        <name>Zn(2+)</name>
        <dbReference type="ChEBI" id="CHEBI:29105"/>
    </cofactor>
    <text evidence="1">Binds 1 zinc ion per subunit.</text>
</comment>
<comment type="similarity">
    <text evidence="1">Belongs to the FPG family.</text>
</comment>
<keyword id="KW-0227">DNA damage</keyword>
<keyword id="KW-0234">DNA repair</keyword>
<keyword id="KW-0238">DNA-binding</keyword>
<keyword id="KW-0326">Glycosidase</keyword>
<keyword id="KW-0378">Hydrolase</keyword>
<keyword id="KW-0456">Lyase</keyword>
<keyword id="KW-0479">Metal-binding</keyword>
<keyword id="KW-0511">Multifunctional enzyme</keyword>
<keyword id="KW-0862">Zinc</keyword>
<keyword id="KW-0863">Zinc-finger</keyword>